<dbReference type="EMBL" id="AE005674">
    <property type="protein sequence ID" value="AAN44621.2"/>
    <property type="status" value="ALT_INIT"/>
    <property type="molecule type" value="Genomic_DNA"/>
</dbReference>
<dbReference type="EMBL" id="AE014073">
    <property type="protein sequence ID" value="AAP18434.1"/>
    <property type="status" value="ALT_FRAME"/>
    <property type="molecule type" value="Genomic_DNA"/>
</dbReference>
<dbReference type="EMBL" id="AE014073">
    <property type="protein sequence ID" value="AAP18435.1"/>
    <property type="status" value="ALT_FRAME"/>
    <property type="molecule type" value="Genomic_DNA"/>
</dbReference>
<dbReference type="STRING" id="198214.SF3150"/>
<dbReference type="PaxDb" id="198214-SF3150"/>
<dbReference type="KEGG" id="sfx:S3359"/>
<dbReference type="KEGG" id="sfx:S3360"/>
<dbReference type="PATRIC" id="fig|623.156.peg.1623"/>
<dbReference type="HOGENOM" id="CLU_051840_2_0_6"/>
<dbReference type="Proteomes" id="UP000001006">
    <property type="component" value="Chromosome"/>
</dbReference>
<dbReference type="Proteomes" id="UP000002673">
    <property type="component" value="Chromosome"/>
</dbReference>
<dbReference type="GO" id="GO:0080146">
    <property type="term" value="F:L-cysteine desulfhydrase activity"/>
    <property type="evidence" value="ECO:0007669"/>
    <property type="project" value="TreeGrafter"/>
</dbReference>
<dbReference type="GO" id="GO:0019450">
    <property type="term" value="P:L-cysteine catabolic process to pyruvate"/>
    <property type="evidence" value="ECO:0007669"/>
    <property type="project" value="TreeGrafter"/>
</dbReference>
<dbReference type="HAMAP" id="MF_01845">
    <property type="entry name" value="UPF0597"/>
    <property type="match status" value="1"/>
</dbReference>
<dbReference type="InterPro" id="IPR005130">
    <property type="entry name" value="Ser_deHydtase-like_asu"/>
</dbReference>
<dbReference type="InterPro" id="IPR021144">
    <property type="entry name" value="UPF0597"/>
</dbReference>
<dbReference type="PANTHER" id="PTHR30501">
    <property type="entry name" value="UPF0597 PROTEIN YHAM"/>
    <property type="match status" value="1"/>
</dbReference>
<dbReference type="PANTHER" id="PTHR30501:SF2">
    <property type="entry name" value="UPF0597 PROTEIN YHAM"/>
    <property type="match status" value="1"/>
</dbReference>
<dbReference type="Pfam" id="PF03313">
    <property type="entry name" value="SDH_alpha"/>
    <property type="match status" value="1"/>
</dbReference>
<dbReference type="PIRSF" id="PIRSF006054">
    <property type="entry name" value="UCP006054"/>
    <property type="match status" value="1"/>
</dbReference>
<proteinExistence type="inferred from homology"/>
<gene>
    <name evidence="1" type="primary">yhaM</name>
    <name type="ordered locus">SF3150</name>
    <name type="ordered locus">S3359/S3360</name>
</gene>
<protein>
    <recommendedName>
        <fullName evidence="1">UPF0597 protein YhaM</fullName>
    </recommendedName>
</protein>
<reference key="1">
    <citation type="journal article" date="2002" name="Nucleic Acids Res.">
        <title>Genome sequence of Shigella flexneri 2a: insights into pathogenicity through comparison with genomes of Escherichia coli K12 and O157.</title>
        <authorList>
            <person name="Jin Q."/>
            <person name="Yuan Z."/>
            <person name="Xu J."/>
            <person name="Wang Y."/>
            <person name="Shen Y."/>
            <person name="Lu W."/>
            <person name="Wang J."/>
            <person name="Liu H."/>
            <person name="Yang J."/>
            <person name="Yang F."/>
            <person name="Zhang X."/>
            <person name="Zhang J."/>
            <person name="Yang G."/>
            <person name="Wu H."/>
            <person name="Qu D."/>
            <person name="Dong J."/>
            <person name="Sun L."/>
            <person name="Xue Y."/>
            <person name="Zhao A."/>
            <person name="Gao Y."/>
            <person name="Zhu J."/>
            <person name="Kan B."/>
            <person name="Ding K."/>
            <person name="Chen S."/>
            <person name="Cheng H."/>
            <person name="Yao Z."/>
            <person name="He B."/>
            <person name="Chen R."/>
            <person name="Ma D."/>
            <person name="Qiang B."/>
            <person name="Wen Y."/>
            <person name="Hou Y."/>
            <person name="Yu J."/>
        </authorList>
    </citation>
    <scope>NUCLEOTIDE SEQUENCE [LARGE SCALE GENOMIC DNA]</scope>
    <source>
        <strain>301 / Serotype 2a</strain>
    </source>
</reference>
<reference key="2">
    <citation type="journal article" date="2003" name="Infect. Immun.">
        <title>Complete genome sequence and comparative genomics of Shigella flexneri serotype 2a strain 2457T.</title>
        <authorList>
            <person name="Wei J."/>
            <person name="Goldberg M.B."/>
            <person name="Burland V."/>
            <person name="Venkatesan M.M."/>
            <person name="Deng W."/>
            <person name="Fournier G."/>
            <person name="Mayhew G.F."/>
            <person name="Plunkett G. III"/>
            <person name="Rose D.J."/>
            <person name="Darling A."/>
            <person name="Mau B."/>
            <person name="Perna N.T."/>
            <person name="Payne S.M."/>
            <person name="Runyen-Janecky L.J."/>
            <person name="Zhou S."/>
            <person name="Schwartz D.C."/>
            <person name="Blattner F.R."/>
        </authorList>
    </citation>
    <scope>NUCLEOTIDE SEQUENCE [LARGE SCALE GENOMIC DNA]</scope>
    <source>
        <strain>ATCC 700930 / 2457T / Serotype 2a</strain>
    </source>
</reference>
<comment type="similarity">
    <text evidence="1">Belongs to the UPF0597 family.</text>
</comment>
<comment type="sequence caution" evidence="2">
    <conflict type="erroneous initiation">
        <sequence resource="EMBL-CDS" id="AAN44621"/>
    </conflict>
</comment>
<comment type="sequence caution" evidence="2">
    <conflict type="frameshift">
        <sequence resource="EMBL-CDS" id="AAP18434"/>
    </conflict>
</comment>
<comment type="sequence caution" evidence="2">
    <conflict type="frameshift">
        <sequence resource="EMBL-CDS" id="AAP18435"/>
    </conflict>
</comment>
<accession>Q83JI4</accession>
<accession>Q7UBH0</accession>
<accession>Q7UBH1</accession>
<feature type="chain" id="PRO_0000339859" description="UPF0597 protein YhaM">
    <location>
        <begin position="1"/>
        <end position="436"/>
    </location>
</feature>
<name>YHAM_SHIFL</name>
<sequence>MFDSTLNPLWQRYILAVQEEVKPALGCTEPISLALAAAVAAAELEGPVERVEAWVSPNLMKNGLGVTVPGTGMVGLPIAAALGALGGNANAGLEVLKDATAQAIADAKALLAAGKVSVKIQEPCNEILFSRAKVWNGEKWACVTIVGGHTNIVHIETHNGVVFTHQACVAEGEQESPLTVLSRTTLAEILKFVNEVPFAAIRFILDSAKLNCALSQEGLSGKWGLHIGATLEKQCERGLLAKDLSSSIVIRTSAASDARMGGATLPAMSNSGSGNQGITAIMPVVVVAEHFGADDERLARALMLSHLSAIYIHNQLPRLSALCAATTAAMGAAAGMAWLVDGRYETISMAISSMIGDVSGMICDGASNSCAMKVSTSASAAWKAVLMALDDTAVTGNEGIVAHDVEQSIANLCALASHSMQQTDRQIIEIMASKAR</sequence>
<keyword id="KW-1185">Reference proteome</keyword>
<organism>
    <name type="scientific">Shigella flexneri</name>
    <dbReference type="NCBI Taxonomy" id="623"/>
    <lineage>
        <taxon>Bacteria</taxon>
        <taxon>Pseudomonadati</taxon>
        <taxon>Pseudomonadota</taxon>
        <taxon>Gammaproteobacteria</taxon>
        <taxon>Enterobacterales</taxon>
        <taxon>Enterobacteriaceae</taxon>
        <taxon>Shigella</taxon>
    </lineage>
</organism>
<evidence type="ECO:0000255" key="1">
    <source>
        <dbReference type="HAMAP-Rule" id="MF_01845"/>
    </source>
</evidence>
<evidence type="ECO:0000305" key="2"/>